<evidence type="ECO:0000255" key="1">
    <source>
        <dbReference type="HAMAP-Rule" id="MF_00558"/>
    </source>
</evidence>
<comment type="function">
    <text evidence="1">Succinyl-CoA synthetase functions in the citric acid cycle (TCA), coupling the hydrolysis of succinyl-CoA to the synthesis of either ATP or GTP and thus represents the only step of substrate-level phosphorylation in the TCA. The beta subunit provides nucleotide specificity of the enzyme and binds the substrate succinate, while the binding sites for coenzyme A and phosphate are found in the alpha subunit.</text>
</comment>
<comment type="catalytic activity">
    <reaction evidence="1">
        <text>succinate + ATP + CoA = succinyl-CoA + ADP + phosphate</text>
        <dbReference type="Rhea" id="RHEA:17661"/>
        <dbReference type="ChEBI" id="CHEBI:30031"/>
        <dbReference type="ChEBI" id="CHEBI:30616"/>
        <dbReference type="ChEBI" id="CHEBI:43474"/>
        <dbReference type="ChEBI" id="CHEBI:57287"/>
        <dbReference type="ChEBI" id="CHEBI:57292"/>
        <dbReference type="ChEBI" id="CHEBI:456216"/>
        <dbReference type="EC" id="6.2.1.5"/>
    </reaction>
    <physiologicalReaction direction="right-to-left" evidence="1">
        <dbReference type="Rhea" id="RHEA:17663"/>
    </physiologicalReaction>
</comment>
<comment type="catalytic activity">
    <reaction evidence="1">
        <text>GTP + succinate + CoA = succinyl-CoA + GDP + phosphate</text>
        <dbReference type="Rhea" id="RHEA:22120"/>
        <dbReference type="ChEBI" id="CHEBI:30031"/>
        <dbReference type="ChEBI" id="CHEBI:37565"/>
        <dbReference type="ChEBI" id="CHEBI:43474"/>
        <dbReference type="ChEBI" id="CHEBI:57287"/>
        <dbReference type="ChEBI" id="CHEBI:57292"/>
        <dbReference type="ChEBI" id="CHEBI:58189"/>
    </reaction>
    <physiologicalReaction direction="right-to-left" evidence="1">
        <dbReference type="Rhea" id="RHEA:22122"/>
    </physiologicalReaction>
</comment>
<comment type="cofactor">
    <cofactor evidence="1">
        <name>Mg(2+)</name>
        <dbReference type="ChEBI" id="CHEBI:18420"/>
    </cofactor>
    <text evidence="1">Binds 1 Mg(2+) ion per subunit.</text>
</comment>
<comment type="pathway">
    <text evidence="1">Carbohydrate metabolism; tricarboxylic acid cycle; succinate from succinyl-CoA (ligase route): step 1/1.</text>
</comment>
<comment type="subunit">
    <text evidence="1">Heterotetramer of two alpha and two beta subunits.</text>
</comment>
<comment type="similarity">
    <text evidence="1">Belongs to the succinate/malate CoA ligase beta subunit family.</text>
</comment>
<accession>A3MH60</accession>
<dbReference type="EC" id="6.2.1.5" evidence="1"/>
<dbReference type="EMBL" id="CP000548">
    <property type="protein sequence ID" value="ABO04465.1"/>
    <property type="molecule type" value="Genomic_DNA"/>
</dbReference>
<dbReference type="RefSeq" id="WP_004189251.1">
    <property type="nucleotide sequence ID" value="NZ_CP007802.1"/>
</dbReference>
<dbReference type="SMR" id="A3MH60"/>
<dbReference type="GeneID" id="92978047"/>
<dbReference type="KEGG" id="bmaz:BM44_2954"/>
<dbReference type="KEGG" id="bmn:BMA10247_0014"/>
<dbReference type="PATRIC" id="fig|320389.8.peg.3329"/>
<dbReference type="UniPathway" id="UPA00223">
    <property type="reaction ID" value="UER00999"/>
</dbReference>
<dbReference type="GO" id="GO:0005829">
    <property type="term" value="C:cytosol"/>
    <property type="evidence" value="ECO:0007669"/>
    <property type="project" value="TreeGrafter"/>
</dbReference>
<dbReference type="GO" id="GO:0042709">
    <property type="term" value="C:succinate-CoA ligase complex"/>
    <property type="evidence" value="ECO:0007669"/>
    <property type="project" value="TreeGrafter"/>
</dbReference>
<dbReference type="GO" id="GO:0005524">
    <property type="term" value="F:ATP binding"/>
    <property type="evidence" value="ECO:0007669"/>
    <property type="project" value="UniProtKB-UniRule"/>
</dbReference>
<dbReference type="GO" id="GO:0000287">
    <property type="term" value="F:magnesium ion binding"/>
    <property type="evidence" value="ECO:0007669"/>
    <property type="project" value="UniProtKB-UniRule"/>
</dbReference>
<dbReference type="GO" id="GO:0004775">
    <property type="term" value="F:succinate-CoA ligase (ADP-forming) activity"/>
    <property type="evidence" value="ECO:0007669"/>
    <property type="project" value="UniProtKB-UniRule"/>
</dbReference>
<dbReference type="GO" id="GO:0004776">
    <property type="term" value="F:succinate-CoA ligase (GDP-forming) activity"/>
    <property type="evidence" value="ECO:0007669"/>
    <property type="project" value="RHEA"/>
</dbReference>
<dbReference type="GO" id="GO:0006104">
    <property type="term" value="P:succinyl-CoA metabolic process"/>
    <property type="evidence" value="ECO:0007669"/>
    <property type="project" value="TreeGrafter"/>
</dbReference>
<dbReference type="GO" id="GO:0006099">
    <property type="term" value="P:tricarboxylic acid cycle"/>
    <property type="evidence" value="ECO:0007669"/>
    <property type="project" value="UniProtKB-UniRule"/>
</dbReference>
<dbReference type="FunFam" id="3.30.1490.20:FF:000002">
    <property type="entry name" value="Succinate--CoA ligase [ADP-forming] subunit beta"/>
    <property type="match status" value="1"/>
</dbReference>
<dbReference type="FunFam" id="3.30.470.20:FF:000002">
    <property type="entry name" value="Succinate--CoA ligase [ADP-forming] subunit beta"/>
    <property type="match status" value="1"/>
</dbReference>
<dbReference type="FunFam" id="3.40.50.261:FF:000001">
    <property type="entry name" value="Succinate--CoA ligase [ADP-forming] subunit beta"/>
    <property type="match status" value="1"/>
</dbReference>
<dbReference type="Gene3D" id="3.30.1490.20">
    <property type="entry name" value="ATP-grasp fold, A domain"/>
    <property type="match status" value="1"/>
</dbReference>
<dbReference type="Gene3D" id="3.30.470.20">
    <property type="entry name" value="ATP-grasp fold, B domain"/>
    <property type="match status" value="1"/>
</dbReference>
<dbReference type="Gene3D" id="3.40.50.261">
    <property type="entry name" value="Succinyl-CoA synthetase domains"/>
    <property type="match status" value="1"/>
</dbReference>
<dbReference type="HAMAP" id="MF_00558">
    <property type="entry name" value="Succ_CoA_beta"/>
    <property type="match status" value="1"/>
</dbReference>
<dbReference type="InterPro" id="IPR011761">
    <property type="entry name" value="ATP-grasp"/>
</dbReference>
<dbReference type="InterPro" id="IPR013650">
    <property type="entry name" value="ATP-grasp_succ-CoA_synth-type"/>
</dbReference>
<dbReference type="InterPro" id="IPR013815">
    <property type="entry name" value="ATP_grasp_subdomain_1"/>
</dbReference>
<dbReference type="InterPro" id="IPR017866">
    <property type="entry name" value="Succ-CoA_synthase_bsu_CS"/>
</dbReference>
<dbReference type="InterPro" id="IPR005811">
    <property type="entry name" value="SUCC_ACL_C"/>
</dbReference>
<dbReference type="InterPro" id="IPR005809">
    <property type="entry name" value="Succ_CoA_ligase-like_bsu"/>
</dbReference>
<dbReference type="InterPro" id="IPR016102">
    <property type="entry name" value="Succinyl-CoA_synth-like"/>
</dbReference>
<dbReference type="NCBIfam" id="NF001913">
    <property type="entry name" value="PRK00696.1"/>
    <property type="match status" value="1"/>
</dbReference>
<dbReference type="NCBIfam" id="TIGR01016">
    <property type="entry name" value="sucCoAbeta"/>
    <property type="match status" value="1"/>
</dbReference>
<dbReference type="PANTHER" id="PTHR11815:SF10">
    <property type="entry name" value="SUCCINATE--COA LIGASE [GDP-FORMING] SUBUNIT BETA, MITOCHONDRIAL"/>
    <property type="match status" value="1"/>
</dbReference>
<dbReference type="PANTHER" id="PTHR11815">
    <property type="entry name" value="SUCCINYL-COA SYNTHETASE BETA CHAIN"/>
    <property type="match status" value="1"/>
</dbReference>
<dbReference type="Pfam" id="PF08442">
    <property type="entry name" value="ATP-grasp_2"/>
    <property type="match status" value="1"/>
</dbReference>
<dbReference type="Pfam" id="PF00549">
    <property type="entry name" value="Ligase_CoA"/>
    <property type="match status" value="1"/>
</dbReference>
<dbReference type="PIRSF" id="PIRSF001554">
    <property type="entry name" value="SucCS_beta"/>
    <property type="match status" value="1"/>
</dbReference>
<dbReference type="SUPFAM" id="SSF56059">
    <property type="entry name" value="Glutathione synthetase ATP-binding domain-like"/>
    <property type="match status" value="1"/>
</dbReference>
<dbReference type="SUPFAM" id="SSF52210">
    <property type="entry name" value="Succinyl-CoA synthetase domains"/>
    <property type="match status" value="1"/>
</dbReference>
<dbReference type="PROSITE" id="PS50975">
    <property type="entry name" value="ATP_GRASP"/>
    <property type="match status" value="1"/>
</dbReference>
<dbReference type="PROSITE" id="PS01217">
    <property type="entry name" value="SUCCINYL_COA_LIG_3"/>
    <property type="match status" value="1"/>
</dbReference>
<proteinExistence type="inferred from homology"/>
<reference key="1">
    <citation type="journal article" date="2010" name="Genome Biol. Evol.">
        <title>Continuing evolution of Burkholderia mallei through genome reduction and large-scale rearrangements.</title>
        <authorList>
            <person name="Losada L."/>
            <person name="Ronning C.M."/>
            <person name="DeShazer D."/>
            <person name="Woods D."/>
            <person name="Fedorova N."/>
            <person name="Kim H.S."/>
            <person name="Shabalina S.A."/>
            <person name="Pearson T.R."/>
            <person name="Brinkac L."/>
            <person name="Tan P."/>
            <person name="Nandi T."/>
            <person name="Crabtree J."/>
            <person name="Badger J."/>
            <person name="Beckstrom-Sternberg S."/>
            <person name="Saqib M."/>
            <person name="Schutzer S.E."/>
            <person name="Keim P."/>
            <person name="Nierman W.C."/>
        </authorList>
    </citation>
    <scope>NUCLEOTIDE SEQUENCE [LARGE SCALE GENOMIC DNA]</scope>
    <source>
        <strain>NCTC 10247</strain>
    </source>
</reference>
<protein>
    <recommendedName>
        <fullName evidence="1">Succinate--CoA ligase [ADP-forming] subunit beta</fullName>
        <ecNumber evidence="1">6.2.1.5</ecNumber>
    </recommendedName>
    <alternativeName>
        <fullName evidence="1">Succinyl-CoA synthetase subunit beta</fullName>
        <shortName evidence="1">SCS-beta</shortName>
    </alternativeName>
</protein>
<sequence length="388" mass="41286">MKIHEYQGKEILRKFGVAVPRGKPAFSVDEAVKVAQELGGPVWVVKAQIHAGGRGKGGGVKVAKSLEQVREYSNQILGMQLKTHQTGPEGQKVNRLLIEEGADIKKELYVGIVIDRVSQKVVVMASSEGGMDIEEVAEKTPEAIHKVAVEPSVGLQDAEADDLAKKIGVPDASIPQAREILKGLYKSFWETDASLAEINPLVLTGDGKVIALDAKFNFDSNALFRHPEIVAYRDLDEEDPAEIEASKFDLAYISLDGNIGCLVNGAGLAMATMDTIKLFGGEPANFLDVGGGATTEKVTEAFKLMLKNPGLKAILVNIFGGIMRCDVIAEGVIAGSKAVNLNVPLVVRMKGTNEDLGKKMLAESGLPIISADSMEEAAQKVVAAAAGK</sequence>
<gene>
    <name evidence="1" type="primary">sucC</name>
    <name type="ordered locus">BMA10247_0014</name>
</gene>
<organism>
    <name type="scientific">Burkholderia mallei (strain NCTC 10247)</name>
    <dbReference type="NCBI Taxonomy" id="320389"/>
    <lineage>
        <taxon>Bacteria</taxon>
        <taxon>Pseudomonadati</taxon>
        <taxon>Pseudomonadota</taxon>
        <taxon>Betaproteobacteria</taxon>
        <taxon>Burkholderiales</taxon>
        <taxon>Burkholderiaceae</taxon>
        <taxon>Burkholderia</taxon>
        <taxon>pseudomallei group</taxon>
    </lineage>
</organism>
<keyword id="KW-0067">ATP-binding</keyword>
<keyword id="KW-0436">Ligase</keyword>
<keyword id="KW-0460">Magnesium</keyword>
<keyword id="KW-0479">Metal-binding</keyword>
<keyword id="KW-0547">Nucleotide-binding</keyword>
<keyword id="KW-0816">Tricarboxylic acid cycle</keyword>
<feature type="chain" id="PRO_1000082038" description="Succinate--CoA ligase [ADP-forming] subunit beta">
    <location>
        <begin position="1"/>
        <end position="388"/>
    </location>
</feature>
<feature type="domain" description="ATP-grasp" evidence="1">
    <location>
        <begin position="9"/>
        <end position="244"/>
    </location>
</feature>
<feature type="binding site" evidence="1">
    <location>
        <position position="46"/>
    </location>
    <ligand>
        <name>ATP</name>
        <dbReference type="ChEBI" id="CHEBI:30616"/>
    </ligand>
</feature>
<feature type="binding site" evidence="1">
    <location>
        <begin position="53"/>
        <end position="55"/>
    </location>
    <ligand>
        <name>ATP</name>
        <dbReference type="ChEBI" id="CHEBI:30616"/>
    </ligand>
</feature>
<feature type="binding site" evidence="1">
    <location>
        <position position="99"/>
    </location>
    <ligand>
        <name>ATP</name>
        <dbReference type="ChEBI" id="CHEBI:30616"/>
    </ligand>
</feature>
<feature type="binding site" evidence="1">
    <location>
        <position position="102"/>
    </location>
    <ligand>
        <name>ATP</name>
        <dbReference type="ChEBI" id="CHEBI:30616"/>
    </ligand>
</feature>
<feature type="binding site" evidence="1">
    <location>
        <position position="107"/>
    </location>
    <ligand>
        <name>ATP</name>
        <dbReference type="ChEBI" id="CHEBI:30616"/>
    </ligand>
</feature>
<feature type="binding site" evidence="1">
    <location>
        <position position="199"/>
    </location>
    <ligand>
        <name>Mg(2+)</name>
        <dbReference type="ChEBI" id="CHEBI:18420"/>
    </ligand>
</feature>
<feature type="binding site" evidence="1">
    <location>
        <position position="213"/>
    </location>
    <ligand>
        <name>Mg(2+)</name>
        <dbReference type="ChEBI" id="CHEBI:18420"/>
    </ligand>
</feature>
<feature type="binding site" evidence="1">
    <location>
        <position position="264"/>
    </location>
    <ligand>
        <name>substrate</name>
        <note>ligand shared with subunit alpha</note>
    </ligand>
</feature>
<feature type="binding site" evidence="1">
    <location>
        <begin position="321"/>
        <end position="323"/>
    </location>
    <ligand>
        <name>substrate</name>
        <note>ligand shared with subunit alpha</note>
    </ligand>
</feature>
<name>SUCC_BURM7</name>